<gene>
    <name evidence="4" type="primary">UGT73DL1</name>
    <name evidence="4" type="synonym">Saoffv11029895m</name>
    <name evidence="6" type="ORF">RND81_06G065500</name>
</gene>
<reference evidence="7" key="1">
    <citation type="journal article" date="2025" name="Nat. Chem. Biol.">
        <title>Unlocking saponin biosynthesis in soapwort.</title>
        <authorList>
            <person name="Jo S."/>
            <person name="El-Demerdash A."/>
            <person name="Owen C."/>
            <person name="Srivastava V."/>
            <person name="Wu D."/>
            <person name="Kikuchi S."/>
            <person name="Reed J."/>
            <person name="Hodgson H."/>
            <person name="Harkess A."/>
            <person name="Shu S."/>
            <person name="Plott C."/>
            <person name="Jenkins J."/>
            <person name="Williams M."/>
            <person name="Boston L.-B."/>
            <person name="Lacchini E."/>
            <person name="Qu T."/>
            <person name="Goossens A."/>
            <person name="Grimwood J."/>
            <person name="Schmutz J."/>
            <person name="Leebens-Mack J."/>
            <person name="Osbourn A."/>
        </authorList>
    </citation>
    <scope>NUCLEOTIDE SEQUENCE [MRNA]</scope>
    <scope>FUNCTION</scope>
    <scope>CATALYTIC ACTIVITY</scope>
    <scope>TISSUE SPECIFICITY</scope>
    <scope>PATHWAY</scope>
    <scope>BIOTECHNOLOGY</scope>
</reference>
<reference evidence="6" key="2">
    <citation type="submission" date="2024-03" db="EMBL/GenBank/DDBJ databases">
        <title>WGS assembly of Saponaria officinalis var. Norfolk2.</title>
        <authorList>
            <person name="Jenkins J."/>
            <person name="Shu S."/>
            <person name="Grimwood J."/>
            <person name="Barry K."/>
            <person name="Goodstein D."/>
            <person name="Schmutz J."/>
            <person name="Leebens-Mack J."/>
            <person name="Osbourn A."/>
        </authorList>
    </citation>
    <scope>NUCLEOTIDE SEQUENCE [LARGE SCALE GENOMIC DNA]</scope>
    <source>
        <strain>cv. Norfolk2</strain>
        <tissue>Leaf</tissue>
    </source>
</reference>
<feature type="chain" id="PRO_0000462358" description="UDP-glucosyl transferase 73DL1">
    <location>
        <begin position="1"/>
        <end position="492"/>
    </location>
</feature>
<feature type="active site" description="Proton acceptor" evidence="1">
    <location>
        <position position="27"/>
    </location>
</feature>
<feature type="active site" description="Charge relay" evidence="1">
    <location>
        <position position="131"/>
    </location>
</feature>
<feature type="binding site" evidence="2">
    <location>
        <position position="352"/>
    </location>
    <ligand>
        <name>UDP</name>
        <dbReference type="ChEBI" id="CHEBI:58223"/>
    </ligand>
</feature>
<feature type="binding site" evidence="2">
    <location>
        <position position="353"/>
    </location>
    <ligand>
        <name>UDP</name>
        <dbReference type="ChEBI" id="CHEBI:58223"/>
    </ligand>
</feature>
<feature type="binding site" evidence="2">
    <location>
        <position position="370"/>
    </location>
    <ligand>
        <name>UDP</name>
        <dbReference type="ChEBI" id="CHEBI:58223"/>
    </ligand>
</feature>
<feature type="binding site" evidence="2">
    <location>
        <position position="375"/>
    </location>
    <ligand>
        <name>UDP</name>
        <dbReference type="ChEBI" id="CHEBI:58223"/>
    </ligand>
</feature>
<feature type="binding site" evidence="2">
    <location>
        <position position="378"/>
    </location>
    <ligand>
        <name>UDP</name>
        <dbReference type="ChEBI" id="CHEBI:58223"/>
    </ligand>
</feature>
<feature type="binding site" evidence="2">
    <location>
        <position position="392"/>
    </location>
    <ligand>
        <name>UDP</name>
        <dbReference type="ChEBI" id="CHEBI:58223"/>
    </ligand>
</feature>
<sequence>MGSNTEATEIPKMPLKIVFLTLPIAGHMLHIVDTASTFAIHGVECTIITTPANVPFIEKSISATNTTIRQFLSIRLVDFPHEAVGLPPGVENFSAVTCPDMRPKISKGLSIIQKPTEDLIKEISPDCIVSDMFYPWTSDFALEIGVPRVVFRGCGMFPMCCWHSIKSHLPHEKVDRDDEMIVLPTLPDHIEMRKSTLPDWVRKPTGYSYLMKMIDAAELKSYGVIVNSFSDLERDYEEYFKNVTGLKVWTVGPISLHVGRNEELEGSDEWVKWLDGKKLDSVIYVSFGGVAKFPPHQLREIAAGLESSGHDFVWVVRASDENGDQAEADEWSLQKFKEKMKKTNHGLVIESWVPQLMFLEHKAIGGMLTHVGWGTMLEGITAGLPLVTWPLYAEQFYNERLVVDVLKIGVGVGVKEFCGLDDIGKKETIGRENIEASVRLVMGDGEEAAAMRLRVKELSEASMKAVREGGSSKANIHDFLNELSTLRSLRQA</sequence>
<comment type="function">
    <text evidence="3">Component of the oleanane-type triterpene saponins (e.g. saponarioside A and saponarioside B) biosynthetic pathway, leading to the production of natural products with detergent properties used as traditional sources of soap (PubMed:39043959). A glycosyltransferase that mediates the conversion of QA-mono to QA-di via the elongation of the C-3 sugar chain with a D-galactose (PubMed:39043959).</text>
</comment>
<comment type="pathway">
    <text evidence="3">Secondary metabolite biosynthesis; terpenoid biosynthesis.</text>
</comment>
<comment type="tissue specificity">
    <text evidence="3">Mainly expressed in flowers, flower buds and young leaves, and, to a lesser extent, in old leaves, stems and roots.</text>
</comment>
<comment type="biotechnology">
    <text evidence="4">Soapwort saponins possess anticancer properties and are also being explored as enhancers for endosomal escape in targeted tumor therapies (PubMed:39043959). They may also serve as precursors for vaccine adjuvants (PubMed:39043959).</text>
</comment>
<comment type="similarity">
    <text evidence="5">Belongs to the UDP-glycosyltransferase family.</text>
</comment>
<keyword id="KW-0328">Glycosyltransferase</keyword>
<keyword id="KW-0808">Transferase</keyword>
<accession>A0AAW1K8I9</accession>
<evidence type="ECO:0000250" key="1">
    <source>
        <dbReference type="UniProtKB" id="A0A0A1HA03"/>
    </source>
</evidence>
<evidence type="ECO:0000250" key="2">
    <source>
        <dbReference type="UniProtKB" id="Q9M156"/>
    </source>
</evidence>
<evidence type="ECO:0000269" key="3">
    <source>
    </source>
</evidence>
<evidence type="ECO:0000303" key="4">
    <source>
    </source>
</evidence>
<evidence type="ECO:0000305" key="5"/>
<evidence type="ECO:0000312" key="6">
    <source>
        <dbReference type="EMBL" id="KAK9714013.1"/>
    </source>
</evidence>
<evidence type="ECO:0000312" key="7">
    <source>
        <dbReference type="EMBL" id="WWM48158.1"/>
    </source>
</evidence>
<name>GT731_SAPOF</name>
<organism>
    <name type="scientific">Saponaria officinalis</name>
    <name type="common">Common soapwort</name>
    <name type="synonym">Lychnis saponaria</name>
    <dbReference type="NCBI Taxonomy" id="3572"/>
    <lineage>
        <taxon>Eukaryota</taxon>
        <taxon>Viridiplantae</taxon>
        <taxon>Streptophyta</taxon>
        <taxon>Embryophyta</taxon>
        <taxon>Tracheophyta</taxon>
        <taxon>Spermatophyta</taxon>
        <taxon>Magnoliopsida</taxon>
        <taxon>eudicotyledons</taxon>
        <taxon>Gunneridae</taxon>
        <taxon>Pentapetalae</taxon>
        <taxon>Caryophyllales</taxon>
        <taxon>Caryophyllaceae</taxon>
        <taxon>Caryophylleae</taxon>
        <taxon>Saponaria</taxon>
    </lineage>
</organism>
<dbReference type="EC" id="2.4.1.-" evidence="3"/>
<dbReference type="EMBL" id="OR426405">
    <property type="protein sequence ID" value="WWM48158.1"/>
    <property type="molecule type" value="mRNA"/>
</dbReference>
<dbReference type="EMBL" id="JBDFQZ010000006">
    <property type="protein sequence ID" value="KAK9714013.1"/>
    <property type="molecule type" value="Genomic_DNA"/>
</dbReference>
<dbReference type="UniPathway" id="UPA00213"/>
<dbReference type="Proteomes" id="UP001443914">
    <property type="component" value="Unassembled WGS sequence"/>
</dbReference>
<dbReference type="GO" id="GO:0035251">
    <property type="term" value="F:UDP-glucosyltransferase activity"/>
    <property type="evidence" value="ECO:0007669"/>
    <property type="project" value="TreeGrafter"/>
</dbReference>
<dbReference type="GO" id="GO:0008194">
    <property type="term" value="F:UDP-glycosyltransferase activity"/>
    <property type="evidence" value="ECO:0000314"/>
    <property type="project" value="UniProtKB"/>
</dbReference>
<dbReference type="GO" id="GO:0070085">
    <property type="term" value="P:glycosylation"/>
    <property type="evidence" value="ECO:0000314"/>
    <property type="project" value="UniProtKB"/>
</dbReference>
<dbReference type="GO" id="GO:0016135">
    <property type="term" value="P:saponin biosynthetic process"/>
    <property type="evidence" value="ECO:0000314"/>
    <property type="project" value="UniProtKB"/>
</dbReference>
<dbReference type="GO" id="GO:0016104">
    <property type="term" value="P:triterpenoid biosynthetic process"/>
    <property type="evidence" value="ECO:0000314"/>
    <property type="project" value="UniProtKB"/>
</dbReference>
<dbReference type="CDD" id="cd03784">
    <property type="entry name" value="GT1_Gtf-like"/>
    <property type="match status" value="1"/>
</dbReference>
<dbReference type="FunFam" id="3.40.50.2000:FF:000202">
    <property type="entry name" value="Glycosyltransferase"/>
    <property type="match status" value="1"/>
</dbReference>
<dbReference type="Gene3D" id="3.40.50.2000">
    <property type="entry name" value="Glycogen Phosphorylase B"/>
    <property type="match status" value="2"/>
</dbReference>
<dbReference type="InterPro" id="IPR002213">
    <property type="entry name" value="UDP_glucos_trans"/>
</dbReference>
<dbReference type="PANTHER" id="PTHR48047">
    <property type="entry name" value="GLYCOSYLTRANSFERASE"/>
    <property type="match status" value="1"/>
</dbReference>
<dbReference type="PANTHER" id="PTHR48047:SF182">
    <property type="entry name" value="GLYCOSYLTRANSFERASE"/>
    <property type="match status" value="1"/>
</dbReference>
<dbReference type="Pfam" id="PF00201">
    <property type="entry name" value="UDPGT"/>
    <property type="match status" value="1"/>
</dbReference>
<dbReference type="SUPFAM" id="SSF53756">
    <property type="entry name" value="UDP-Glycosyltransferase/glycogen phosphorylase"/>
    <property type="match status" value="1"/>
</dbReference>
<protein>
    <recommendedName>
        <fullName evidence="4">UDP-glucosyl transferase 73DL1</fullName>
        <shortName evidence="4">SoUGT73DL1</shortName>
        <ecNumber evidence="3">2.4.1.-</ecNumber>
    </recommendedName>
</protein>
<proteinExistence type="evidence at protein level"/>